<protein>
    <recommendedName>
        <fullName>Serine-aspartate repeat-containing protein F</fullName>
    </recommendedName>
</protein>
<sequence length="1633" mass="174771">MKKRRQGPINKRVDFLSNKVNKYSIRKFTVGTASILVGATLMFGAADNEAKAAEDNQLESASKEEQKGSRDNESSKLNQVDLDNGSHSSEKTTNVNNATEVKKVEAPTTSDVSKPKANEAVVTNESTKPKTTEAPTVNEESIAETPKTSTTQQDSTEKNNPSLKDNLNSSSTTSKESKTDEHSTKQAQMSTNKSNLDTNDSPTQSEKTSSQANNDSTDNQSAPSKQLDSKPSEQKVYKTKFNDEPTQDVEHTTTKLKTPSISTDSSVNDKQDYTRSAVASLGVDSNETEAITNAVRDNLDLKAASREQINEAIIAEALKKDFSNPDYGVDTPLALNTSQSKNSPHKSASPRMNLMSLAAEPNSGKNVNDKVKITNPTLSLNKSNNHANNVIWPTSNEQFNLKANYELDDSIKEGDTFTIKYGQYIRPGGLELPAIKTQLRSKDGSIVANGVYDKTTNTTTYTFTNYVDQYQNITGSFDLIATPKRETAIKDNQNYPMEVTIANEVVKKDFIVDYGNKKDNTTTAAVANVDNVNNKHNEVVYLNQNNQNPKYAKYFSTVKNGKFIPGEVKVYEVTDTNAMVDSFNPDLNSSNVKDVTSQFTPKVSADGTRVDINFARSMANGKKYIVTQAVRPTGTGNVYTEYWLTRDGTTNTNDFYRGTKSTTVTYLNGSSTAQGDNPTYSLGDYVWLDKNKNGVQDDDEKGLAGVYVTLKDSNNRELQRVTTDQSGHYQFDNLQNGTYTVEFAIPDNYTPSPANNSTNDAIDSDGERDGTRKVVVAKGTINNADNMTVDTGFYLTPKYNVGDYVWEDTNKDGIQDDNEKGISNVKVTLKNKNGDTIGTTTTDSNGKYEFTGLENGDYTIEFETPEGYTPTKQNSGSDEGKDSNGTKTTVTVKDADNKTIDSGFYKPIYNLGDYVWEDTNKDGIQDDSEKGISGVKVTLKDKNGNAIGTTTTDASGHYQFKGLENGSYTVEFETPSGYTPTKANSGQDITVDSNGITTTGIINGADNLTIDSGFYKTPKYSVGDYVWEDTNKDGIQDDNEKGISGVKVTLKDEKGNIISTTTTDENGKYQFDNLDSGNYIIHFEKPEGMTQTTANSGNDDEKDADGEDVRVTITDHDDFSIDNGYFDDDSDSDSDADSDSDSDSDSDADSDSDADSDSDSDSDSDSDSDSDSDSDSDSDSDSDSDADSDSDADSDSDSDSDSDSDSDSDSDSDSDSDSDSDSDADSDSDADSDSDADSDSDADSDSDSDSDSDADSDSDSDSDSDADSDSDSDSDSDADSDSDSDSDSDADSDSDSDSDSDADSDSDSDSDSDSDSDSDSDSDSDSDSDSDSDSDSDSDSDSDSDADSDSDSDSDSDADSDSDADSDSDSDSDSDSDSDSDADSDSDSDSDSDSDSDSDADSDSDSDSDSDAESDSDSDSDSDSDSDSDSDSDSDSDSDSDSDSDSDADSDSDSDSDSDSDSDSDSDSDSDSDSDSDADSDSYSDSDSDSDSDSDSDSDSDSDSDSDSDSDSDSDSDSDSDSDSDSDSDSDSDSDSDSDSDSDSDSDSDSDSDSDSDSDSDSDSDSDSDSDSDSDSDSDSDSDSDSDKNAKDKLPDTGANEDHDSKGTLLGTLFAGLGALLLGRRRKKDNKEK</sequence>
<keyword id="KW-0134">Cell wall</keyword>
<keyword id="KW-0572">Peptidoglycan-anchor</keyword>
<keyword id="KW-0677">Repeat</keyword>
<keyword id="KW-0964">Secreted</keyword>
<keyword id="KW-0732">Signal</keyword>
<keyword id="KW-0843">Virulence</keyword>
<evidence type="ECO:0000250" key="1"/>
<evidence type="ECO:0000255" key="2"/>
<evidence type="ECO:0000255" key="3">
    <source>
        <dbReference type="PROSITE-ProRule" id="PRU00477"/>
    </source>
</evidence>
<evidence type="ECO:0000256" key="4">
    <source>
        <dbReference type="SAM" id="MobiDB-lite"/>
    </source>
</evidence>
<evidence type="ECO:0000305" key="5"/>
<dbReference type="EMBL" id="AE015929">
    <property type="protein sequence ID" value="AAO06038.1"/>
    <property type="molecule type" value="Genomic_DNA"/>
</dbReference>
<dbReference type="RefSeq" id="NP_765950.1">
    <property type="nucleotide sequence ID" value="NC_004461.1"/>
</dbReference>
<dbReference type="RefSeq" id="WP_011082831.1">
    <property type="nucleotide sequence ID" value="NC_004461.1"/>
</dbReference>
<dbReference type="SMR" id="Q8CMP4"/>
<dbReference type="KEGG" id="sep:SE_2395"/>
<dbReference type="PATRIC" id="fig|176280.10.peg.2335"/>
<dbReference type="eggNOG" id="COG2931">
    <property type="taxonomic scope" value="Bacteria"/>
</dbReference>
<dbReference type="eggNOG" id="COG3266">
    <property type="taxonomic scope" value="Bacteria"/>
</dbReference>
<dbReference type="eggNOG" id="COG4932">
    <property type="taxonomic scope" value="Bacteria"/>
</dbReference>
<dbReference type="HOGENOM" id="CLU_004137_0_1_9"/>
<dbReference type="OrthoDB" id="2278104at2"/>
<dbReference type="Proteomes" id="UP000001411">
    <property type="component" value="Chromosome"/>
</dbReference>
<dbReference type="GO" id="GO:0005576">
    <property type="term" value="C:extracellular region"/>
    <property type="evidence" value="ECO:0007669"/>
    <property type="project" value="UniProtKB-KW"/>
</dbReference>
<dbReference type="GO" id="GO:0007155">
    <property type="term" value="P:cell adhesion"/>
    <property type="evidence" value="ECO:0007669"/>
    <property type="project" value="InterPro"/>
</dbReference>
<dbReference type="Gene3D" id="2.60.40.1280">
    <property type="match status" value="1"/>
</dbReference>
<dbReference type="Gene3D" id="2.60.40.10">
    <property type="entry name" value="Immunoglobulins"/>
    <property type="match status" value="4"/>
</dbReference>
<dbReference type="InterPro" id="IPR008966">
    <property type="entry name" value="Adhesion_dom_sf"/>
</dbReference>
<dbReference type="InterPro" id="IPR011252">
    <property type="entry name" value="Fibrogen-bd_dom1"/>
</dbReference>
<dbReference type="InterPro" id="IPR013783">
    <property type="entry name" value="Ig-like_fold"/>
</dbReference>
<dbReference type="InterPro" id="IPR019931">
    <property type="entry name" value="LPXTG_anchor"/>
</dbReference>
<dbReference type="InterPro" id="IPR051417">
    <property type="entry name" value="SDr/BOS_complex"/>
</dbReference>
<dbReference type="InterPro" id="IPR033764">
    <property type="entry name" value="Sdr_B"/>
</dbReference>
<dbReference type="InterPro" id="IPR041171">
    <property type="entry name" value="SDR_Ig"/>
</dbReference>
<dbReference type="InterPro" id="IPR005877">
    <property type="entry name" value="YSIRK_signal_dom"/>
</dbReference>
<dbReference type="NCBIfam" id="TIGR01167">
    <property type="entry name" value="LPXTG_anchor"/>
    <property type="match status" value="1"/>
</dbReference>
<dbReference type="NCBIfam" id="TIGR01168">
    <property type="entry name" value="YSIRK_signal"/>
    <property type="match status" value="1"/>
</dbReference>
<dbReference type="PANTHER" id="PTHR23303">
    <property type="entry name" value="CARBOXYPEPTIDASE REGULATORY REGION-CONTAINING"/>
    <property type="match status" value="1"/>
</dbReference>
<dbReference type="PANTHER" id="PTHR23303:SF15">
    <property type="entry name" value="COLOSSIN-A"/>
    <property type="match status" value="1"/>
</dbReference>
<dbReference type="Pfam" id="PF17961">
    <property type="entry name" value="Big_8"/>
    <property type="match status" value="1"/>
</dbReference>
<dbReference type="Pfam" id="PF00746">
    <property type="entry name" value="Gram_pos_anchor"/>
    <property type="match status" value="1"/>
</dbReference>
<dbReference type="Pfam" id="PF17210">
    <property type="entry name" value="SdrD_B"/>
    <property type="match status" value="4"/>
</dbReference>
<dbReference type="Pfam" id="PF04650">
    <property type="entry name" value="YSIRK_signal"/>
    <property type="match status" value="1"/>
</dbReference>
<dbReference type="SUPFAM" id="SSF49401">
    <property type="entry name" value="Bacterial adhesins"/>
    <property type="match status" value="2"/>
</dbReference>
<dbReference type="SUPFAM" id="SSF117074">
    <property type="entry name" value="Hypothetical protein PA1324"/>
    <property type="match status" value="4"/>
</dbReference>
<dbReference type="PROSITE" id="PS50847">
    <property type="entry name" value="GRAM_POS_ANCHORING"/>
    <property type="match status" value="1"/>
</dbReference>
<name>SDRF_STAES</name>
<comment type="function">
    <text evidence="1">Binds to type I collagen via alpha-2(I) or alpha-1(I) chains.</text>
</comment>
<comment type="subcellular location">
    <subcellularLocation>
        <location evidence="3">Secreted</location>
        <location evidence="3">Cell wall</location>
        <topology evidence="3">Peptidoglycan-anchor</topology>
    </subcellularLocation>
</comment>
<comment type="domain">
    <text evidence="1">Each CNA-B domain is able to independently mediate adherence to the substrate.</text>
</comment>
<comment type="similarity">
    <text evidence="5">Belongs to the serine-aspartate repeat-containing protein (SDr) family.</text>
</comment>
<reference key="1">
    <citation type="journal article" date="2003" name="Mol. Microbiol.">
        <title>Genome-based analysis of virulence genes in a non-biofilm-forming Staphylococcus epidermidis strain (ATCC 12228).</title>
        <authorList>
            <person name="Zhang Y.-Q."/>
            <person name="Ren S.-X."/>
            <person name="Li H.-L."/>
            <person name="Wang Y.-X."/>
            <person name="Fu G."/>
            <person name="Yang J."/>
            <person name="Qin Z.-Q."/>
            <person name="Miao Y.-G."/>
            <person name="Wang W.-Y."/>
            <person name="Chen R.-S."/>
            <person name="Shen Y."/>
            <person name="Chen Z."/>
            <person name="Yuan Z.-H."/>
            <person name="Zhao G.-P."/>
            <person name="Qu D."/>
            <person name="Danchin A."/>
            <person name="Wen Y.-M."/>
        </authorList>
    </citation>
    <scope>NUCLEOTIDE SEQUENCE [LARGE SCALE GENOMIC DNA]</scope>
    <source>
        <strain>ATCC 12228 / FDA PCI 1200</strain>
    </source>
</reference>
<feature type="signal peptide" evidence="2">
    <location>
        <begin position="1"/>
        <end position="45"/>
    </location>
</feature>
<feature type="chain" id="PRO_0000304881" description="Serine-aspartate repeat-containing protein F">
    <location>
        <begin position="46"/>
        <end position="1597"/>
    </location>
</feature>
<feature type="propeptide" id="PRO_0000304882" description="Removed by sortase" evidence="3">
    <location>
        <begin position="1598"/>
        <end position="1633"/>
    </location>
</feature>
<feature type="domain" description="CNA-B 1">
    <location>
        <begin position="679"/>
        <end position="797"/>
    </location>
</feature>
<feature type="domain" description="CNA-B 2">
    <location>
        <begin position="798"/>
        <end position="907"/>
    </location>
</feature>
<feature type="domain" description="CNA-B 3">
    <location>
        <begin position="908"/>
        <end position="1018"/>
    </location>
</feature>
<feature type="domain" description="CNA-B 4">
    <location>
        <begin position="1019"/>
        <end position="1129"/>
    </location>
</feature>
<feature type="region of interest" description="Ligand binding A region">
    <location>
        <begin position="46"/>
        <end position="678"/>
    </location>
</feature>
<feature type="region of interest" description="Disordered" evidence="4">
    <location>
        <begin position="51"/>
        <end position="269"/>
    </location>
</feature>
<feature type="region of interest" description="Type I collagen binding region" evidence="1">
    <location>
        <begin position="679"/>
        <end position="1129"/>
    </location>
</feature>
<feature type="region of interest" description="Disordered" evidence="4">
    <location>
        <begin position="862"/>
        <end position="889"/>
    </location>
</feature>
<feature type="region of interest" description="Disordered" evidence="4">
    <location>
        <begin position="1085"/>
        <end position="1608"/>
    </location>
</feature>
<feature type="short sequence motif" description="LPXTG sorting signal" evidence="3">
    <location>
        <begin position="1594"/>
        <end position="1598"/>
    </location>
</feature>
<feature type="compositionally biased region" description="Basic and acidic residues" evidence="4">
    <location>
        <begin position="61"/>
        <end position="74"/>
    </location>
</feature>
<feature type="compositionally biased region" description="Polar residues" evidence="4">
    <location>
        <begin position="85"/>
        <end position="99"/>
    </location>
</feature>
<feature type="compositionally biased region" description="Polar residues" evidence="4">
    <location>
        <begin position="146"/>
        <end position="168"/>
    </location>
</feature>
<feature type="compositionally biased region" description="Basic and acidic residues" evidence="4">
    <location>
        <begin position="175"/>
        <end position="184"/>
    </location>
</feature>
<feature type="compositionally biased region" description="Polar residues" evidence="4">
    <location>
        <begin position="186"/>
        <end position="226"/>
    </location>
</feature>
<feature type="compositionally biased region" description="Basic and acidic residues" evidence="4">
    <location>
        <begin position="227"/>
        <end position="253"/>
    </location>
</feature>
<feature type="compositionally biased region" description="Polar residues" evidence="4">
    <location>
        <begin position="255"/>
        <end position="266"/>
    </location>
</feature>
<feature type="compositionally biased region" description="Basic and acidic residues" evidence="4">
    <location>
        <begin position="1107"/>
        <end position="1119"/>
    </location>
</feature>
<feature type="compositionally biased region" description="Acidic residues" evidence="4">
    <location>
        <begin position="1125"/>
        <end position="1584"/>
    </location>
</feature>
<feature type="compositionally biased region" description="Basic and acidic residues" evidence="4">
    <location>
        <begin position="1585"/>
        <end position="1606"/>
    </location>
</feature>
<feature type="modified residue" description="Pentaglycyl murein peptidoglycan amidated threonine" evidence="3">
    <location>
        <position position="1597"/>
    </location>
</feature>
<gene>
    <name type="primary">sdrF</name>
    <name type="ordered locus">SE_2395</name>
</gene>
<proteinExistence type="inferred from homology"/>
<organism>
    <name type="scientific">Staphylococcus epidermidis (strain ATCC 12228 / FDA PCI 1200)</name>
    <dbReference type="NCBI Taxonomy" id="176280"/>
    <lineage>
        <taxon>Bacteria</taxon>
        <taxon>Bacillati</taxon>
        <taxon>Bacillota</taxon>
        <taxon>Bacilli</taxon>
        <taxon>Bacillales</taxon>
        <taxon>Staphylococcaceae</taxon>
        <taxon>Staphylococcus</taxon>
    </lineage>
</organism>
<accession>Q8CMP4</accession>